<name>Y2330_MYCLB</name>
<evidence type="ECO:0000255" key="1">
    <source>
        <dbReference type="HAMAP-Rule" id="MF_00274"/>
    </source>
</evidence>
<evidence type="ECO:0000256" key="2">
    <source>
        <dbReference type="SAM" id="MobiDB-lite"/>
    </source>
</evidence>
<organism>
    <name type="scientific">Mycobacterium leprae (strain Br4923)</name>
    <dbReference type="NCBI Taxonomy" id="561304"/>
    <lineage>
        <taxon>Bacteria</taxon>
        <taxon>Bacillati</taxon>
        <taxon>Actinomycetota</taxon>
        <taxon>Actinomycetes</taxon>
        <taxon>Mycobacteriales</taxon>
        <taxon>Mycobacteriaceae</taxon>
        <taxon>Mycobacterium</taxon>
    </lineage>
</organism>
<reference key="1">
    <citation type="journal article" date="2009" name="Nat. Genet.">
        <title>Comparative genomic and phylogeographic analysis of Mycobacterium leprae.</title>
        <authorList>
            <person name="Monot M."/>
            <person name="Honore N."/>
            <person name="Garnier T."/>
            <person name="Zidane N."/>
            <person name="Sherafi D."/>
            <person name="Paniz-Mondolfi A."/>
            <person name="Matsuoka M."/>
            <person name="Taylor G.M."/>
            <person name="Donoghue H.D."/>
            <person name="Bouwman A."/>
            <person name="Mays S."/>
            <person name="Watson C."/>
            <person name="Lockwood D."/>
            <person name="Khamispour A."/>
            <person name="Dowlati Y."/>
            <person name="Jianping S."/>
            <person name="Rea T.H."/>
            <person name="Vera-Cabrera L."/>
            <person name="Stefani M.M."/>
            <person name="Banu S."/>
            <person name="Macdonald M."/>
            <person name="Sapkota B.R."/>
            <person name="Spencer J.S."/>
            <person name="Thomas J."/>
            <person name="Harshman K."/>
            <person name="Singh P."/>
            <person name="Busso P."/>
            <person name="Gattiker A."/>
            <person name="Rougemont J."/>
            <person name="Brennan P.J."/>
            <person name="Cole S.T."/>
        </authorList>
    </citation>
    <scope>NUCLEOTIDE SEQUENCE [LARGE SCALE GENOMIC DNA]</scope>
    <source>
        <strain>Br4923</strain>
    </source>
</reference>
<feature type="chain" id="PRO_1000197668" description="Nucleoid-associated protein MLBr02330">
    <location>
        <begin position="1"/>
        <end position="116"/>
    </location>
</feature>
<feature type="region of interest" description="Disordered" evidence="2">
    <location>
        <begin position="96"/>
        <end position="116"/>
    </location>
</feature>
<gene>
    <name type="ordered locus">MLBr02330</name>
</gene>
<dbReference type="EMBL" id="FM211192">
    <property type="protein sequence ID" value="CAR72428.1"/>
    <property type="molecule type" value="Genomic_DNA"/>
</dbReference>
<dbReference type="SMR" id="B8ZT20"/>
<dbReference type="KEGG" id="mlb:MLBr02330"/>
<dbReference type="HOGENOM" id="CLU_140930_4_0_11"/>
<dbReference type="Proteomes" id="UP000006900">
    <property type="component" value="Chromosome"/>
</dbReference>
<dbReference type="GO" id="GO:0043590">
    <property type="term" value="C:bacterial nucleoid"/>
    <property type="evidence" value="ECO:0007669"/>
    <property type="project" value="UniProtKB-UniRule"/>
</dbReference>
<dbReference type="GO" id="GO:0005829">
    <property type="term" value="C:cytosol"/>
    <property type="evidence" value="ECO:0007669"/>
    <property type="project" value="TreeGrafter"/>
</dbReference>
<dbReference type="GO" id="GO:0003677">
    <property type="term" value="F:DNA binding"/>
    <property type="evidence" value="ECO:0007669"/>
    <property type="project" value="UniProtKB-UniRule"/>
</dbReference>
<dbReference type="Gene3D" id="3.30.1310.10">
    <property type="entry name" value="Nucleoid-associated protein YbaB-like domain"/>
    <property type="match status" value="1"/>
</dbReference>
<dbReference type="HAMAP" id="MF_00274">
    <property type="entry name" value="DNA_YbaB_EbfC"/>
    <property type="match status" value="1"/>
</dbReference>
<dbReference type="InterPro" id="IPR036894">
    <property type="entry name" value="YbaB-like_sf"/>
</dbReference>
<dbReference type="InterPro" id="IPR004401">
    <property type="entry name" value="YbaB/EbfC"/>
</dbReference>
<dbReference type="NCBIfam" id="TIGR00103">
    <property type="entry name" value="DNA_YbaB_EbfC"/>
    <property type="match status" value="1"/>
</dbReference>
<dbReference type="PANTHER" id="PTHR33449">
    <property type="entry name" value="NUCLEOID-ASSOCIATED PROTEIN YBAB"/>
    <property type="match status" value="1"/>
</dbReference>
<dbReference type="PANTHER" id="PTHR33449:SF1">
    <property type="entry name" value="NUCLEOID-ASSOCIATED PROTEIN YBAB"/>
    <property type="match status" value="1"/>
</dbReference>
<dbReference type="Pfam" id="PF02575">
    <property type="entry name" value="YbaB_DNA_bd"/>
    <property type="match status" value="1"/>
</dbReference>
<dbReference type="PIRSF" id="PIRSF004555">
    <property type="entry name" value="UCP004555"/>
    <property type="match status" value="1"/>
</dbReference>
<dbReference type="SUPFAM" id="SSF82607">
    <property type="entry name" value="YbaB-like"/>
    <property type="match status" value="1"/>
</dbReference>
<accession>B8ZT20</accession>
<sequence length="116" mass="11932">MQPGGDMSALLAQAQQMQQKLLETQQQLANAQVHGQGGGGLVEVVVKGSGEVVSVAIDPKVVDPGDIETLQDLIVGAMADASKQVTKLAQERLGALTSAMRPTAPPPTPPTYMAGT</sequence>
<comment type="function">
    <text evidence="1">Binds to DNA and alters its conformation. May be involved in regulation of gene expression, nucleoid organization and DNA protection.</text>
</comment>
<comment type="subunit">
    <text evidence="1">Homodimer.</text>
</comment>
<comment type="subcellular location">
    <subcellularLocation>
        <location evidence="1">Cytoplasm</location>
        <location evidence="1">Nucleoid</location>
    </subcellularLocation>
</comment>
<comment type="similarity">
    <text evidence="1">Belongs to the YbaB/EbfC family.</text>
</comment>
<keyword id="KW-0963">Cytoplasm</keyword>
<keyword id="KW-0238">DNA-binding</keyword>
<proteinExistence type="inferred from homology"/>
<protein>
    <recommendedName>
        <fullName evidence="1">Nucleoid-associated protein MLBr02330</fullName>
    </recommendedName>
</protein>